<reference key="1">
    <citation type="online journal article" date="1995" name="Plant Gene Register">
        <title>A full-length cDNA coding for mitochondrial malate dehydrogenase from Brassica napus L.</title>
        <authorList>
            <person name="Witt U."/>
            <person name="Gruneberg-Seiler M."/>
            <person name="Abel W.O."/>
        </authorList>
        <locator>PGR95-068</locator>
    </citation>
    <scope>NUCLEOTIDE SEQUENCE [MRNA]</scope>
    <source>
        <strain>cv. Andor</strain>
        <tissue>Leaf</tissue>
    </source>
</reference>
<feature type="transit peptide" description="Mitochondrion" evidence="2">
    <location>
        <begin position="1"/>
        <end position="22"/>
    </location>
</feature>
<feature type="chain" id="PRO_0000018623" description="Malate dehydrogenase, mitochondrial">
    <location>
        <begin position="23"/>
        <end position="341"/>
    </location>
</feature>
<feature type="binding site" evidence="1">
    <location>
        <begin position="36"/>
        <end position="42"/>
    </location>
    <ligand>
        <name>NAD(+)</name>
        <dbReference type="ChEBI" id="CHEBI:57540"/>
    </ligand>
</feature>
<feature type="binding site" evidence="1">
    <location>
        <position position="62"/>
    </location>
    <ligand>
        <name>NAD(+)</name>
        <dbReference type="ChEBI" id="CHEBI:57540"/>
    </ligand>
</feature>
<feature type="binding site" evidence="1">
    <location>
        <position position="109"/>
    </location>
    <ligand>
        <name>substrate</name>
    </ligand>
</feature>
<feature type="binding site" evidence="1">
    <location>
        <position position="115"/>
    </location>
    <ligand>
        <name>substrate</name>
    </ligand>
</feature>
<feature type="binding site" evidence="1">
    <location>
        <position position="122"/>
    </location>
    <ligand>
        <name>NAD(+)</name>
        <dbReference type="ChEBI" id="CHEBI:57540"/>
    </ligand>
</feature>
<feature type="binding site" evidence="1">
    <location>
        <begin position="145"/>
        <end position="147"/>
    </location>
    <ligand>
        <name>NAD(+)</name>
        <dbReference type="ChEBI" id="CHEBI:57540"/>
    </ligand>
</feature>
<feature type="binding site" evidence="1">
    <location>
        <position position="147"/>
    </location>
    <ligand>
        <name>substrate</name>
    </ligand>
</feature>
<feature type="binding site" evidence="1">
    <location>
        <position position="181"/>
    </location>
    <ligand>
        <name>substrate</name>
    </ligand>
</feature>
<feature type="binding site" evidence="1">
    <location>
        <position position="256"/>
    </location>
    <ligand>
        <name>NAD(+)</name>
        <dbReference type="ChEBI" id="CHEBI:57540"/>
    </ligand>
</feature>
<comment type="catalytic activity">
    <reaction>
        <text>(S)-malate + NAD(+) = oxaloacetate + NADH + H(+)</text>
        <dbReference type="Rhea" id="RHEA:21432"/>
        <dbReference type="ChEBI" id="CHEBI:15378"/>
        <dbReference type="ChEBI" id="CHEBI:15589"/>
        <dbReference type="ChEBI" id="CHEBI:16452"/>
        <dbReference type="ChEBI" id="CHEBI:57540"/>
        <dbReference type="ChEBI" id="CHEBI:57945"/>
        <dbReference type="EC" id="1.1.1.37"/>
    </reaction>
</comment>
<comment type="subunit">
    <text evidence="1">Homodimer.</text>
</comment>
<comment type="subcellular location">
    <subcellularLocation>
        <location>Mitochondrion matrix</location>
    </subcellularLocation>
</comment>
<comment type="similarity">
    <text evidence="3">Belongs to the LDH/MDH superfamily. MDH type 1 family.</text>
</comment>
<keyword id="KW-0496">Mitochondrion</keyword>
<keyword id="KW-0520">NAD</keyword>
<keyword id="KW-0560">Oxidoreductase</keyword>
<keyword id="KW-0809">Transit peptide</keyword>
<keyword id="KW-0816">Tricarboxylic acid cycle</keyword>
<accession>Q43744</accession>
<sequence>MFRSALVRSSASAKQSLLRRSFSSGSVPERKVAILGAAGGIGQPLALLMKLNPLVSSLSLYDIANTPGVAADVGHINTRSQVVGYMGDDNLAKALEGADLVIIPAGVPRKPGMTRDDLFNINAGIVKNLWSAIAKYCPHALVNMISNPVNSTVPIAAEIFKKAGMYDEKKLFGVTTLDVVRVKTSYAGKANVPVAEVNVPAIVGHAGVTILPLFSQATPQAILSGDALTVTTKRTQDGGTEVEEAKAGKGSATLSMAYAGALFADACLKGLNGVPDVVECSYVQSTITELPFFASKVRLGKNGVEEVLDLGPLSDFEKEGLEALRPGIKSTIEKGVKFANQ</sequence>
<protein>
    <recommendedName>
        <fullName>Malate dehydrogenase, mitochondrial</fullName>
        <ecNumber>1.1.1.37</ecNumber>
    </recommendedName>
</protein>
<gene>
    <name type="primary">MDH</name>
</gene>
<dbReference type="EC" id="1.1.1.37"/>
<dbReference type="EMBL" id="X89451">
    <property type="protein sequence ID" value="CAA61621.1"/>
    <property type="molecule type" value="mRNA"/>
</dbReference>
<dbReference type="PIR" id="S57958">
    <property type="entry name" value="S57958"/>
</dbReference>
<dbReference type="RefSeq" id="NP_001302862.1">
    <property type="nucleotide sequence ID" value="NM_001315933.1"/>
</dbReference>
<dbReference type="SMR" id="Q43744"/>
<dbReference type="GeneID" id="106360426"/>
<dbReference type="OrthoDB" id="1072759at2759"/>
<dbReference type="GO" id="GO:0005759">
    <property type="term" value="C:mitochondrial matrix"/>
    <property type="evidence" value="ECO:0007669"/>
    <property type="project" value="UniProtKB-SubCell"/>
</dbReference>
<dbReference type="GO" id="GO:0030060">
    <property type="term" value="F:L-malate dehydrogenase (NAD+) activity"/>
    <property type="evidence" value="ECO:0007669"/>
    <property type="project" value="UniProtKB-EC"/>
</dbReference>
<dbReference type="GO" id="GO:0019752">
    <property type="term" value="P:carboxylic acid metabolic process"/>
    <property type="evidence" value="ECO:0007669"/>
    <property type="project" value="InterPro"/>
</dbReference>
<dbReference type="GO" id="GO:0006099">
    <property type="term" value="P:tricarboxylic acid cycle"/>
    <property type="evidence" value="ECO:0007669"/>
    <property type="project" value="UniProtKB-KW"/>
</dbReference>
<dbReference type="CDD" id="cd01337">
    <property type="entry name" value="MDH_glyoxysomal_mitochondrial"/>
    <property type="match status" value="1"/>
</dbReference>
<dbReference type="FunFam" id="3.40.50.720:FF:000013">
    <property type="entry name" value="Malate dehydrogenase"/>
    <property type="match status" value="1"/>
</dbReference>
<dbReference type="FunFam" id="3.90.110.10:FF:000001">
    <property type="entry name" value="Malate dehydrogenase"/>
    <property type="match status" value="1"/>
</dbReference>
<dbReference type="Gene3D" id="3.90.110.10">
    <property type="entry name" value="Lactate dehydrogenase/glycoside hydrolase, family 4, C-terminal"/>
    <property type="match status" value="1"/>
</dbReference>
<dbReference type="Gene3D" id="3.40.50.720">
    <property type="entry name" value="NAD(P)-binding Rossmann-like Domain"/>
    <property type="match status" value="1"/>
</dbReference>
<dbReference type="InterPro" id="IPR001557">
    <property type="entry name" value="L-lactate/malate_DH"/>
</dbReference>
<dbReference type="InterPro" id="IPR022383">
    <property type="entry name" value="Lactate/malate_DH_C"/>
</dbReference>
<dbReference type="InterPro" id="IPR001236">
    <property type="entry name" value="Lactate/malate_DH_N"/>
</dbReference>
<dbReference type="InterPro" id="IPR015955">
    <property type="entry name" value="Lactate_DH/Glyco_Ohase_4_C"/>
</dbReference>
<dbReference type="InterPro" id="IPR010097">
    <property type="entry name" value="Malate_DH_type1"/>
</dbReference>
<dbReference type="InterPro" id="IPR036291">
    <property type="entry name" value="NAD(P)-bd_dom_sf"/>
</dbReference>
<dbReference type="NCBIfam" id="TIGR01772">
    <property type="entry name" value="MDH_euk_gproteo"/>
    <property type="match status" value="1"/>
</dbReference>
<dbReference type="PANTHER" id="PTHR11540">
    <property type="entry name" value="MALATE AND LACTATE DEHYDROGENASE"/>
    <property type="match status" value="1"/>
</dbReference>
<dbReference type="PANTHER" id="PTHR11540:SF58">
    <property type="entry name" value="MALATE DEHYDROGENASE 1, MITOCHONDRIAL-RELATED"/>
    <property type="match status" value="1"/>
</dbReference>
<dbReference type="Pfam" id="PF02866">
    <property type="entry name" value="Ldh_1_C"/>
    <property type="match status" value="1"/>
</dbReference>
<dbReference type="Pfam" id="PF00056">
    <property type="entry name" value="Ldh_1_N"/>
    <property type="match status" value="1"/>
</dbReference>
<dbReference type="PIRSF" id="PIRSF000102">
    <property type="entry name" value="Lac_mal_DH"/>
    <property type="match status" value="1"/>
</dbReference>
<dbReference type="SUPFAM" id="SSF56327">
    <property type="entry name" value="LDH C-terminal domain-like"/>
    <property type="match status" value="1"/>
</dbReference>
<dbReference type="SUPFAM" id="SSF51735">
    <property type="entry name" value="NAD(P)-binding Rossmann-fold domains"/>
    <property type="match status" value="1"/>
</dbReference>
<name>MDHM_BRANA</name>
<proteinExistence type="evidence at transcript level"/>
<evidence type="ECO:0000250" key="1"/>
<evidence type="ECO:0000255" key="2"/>
<evidence type="ECO:0000305" key="3"/>
<organism>
    <name type="scientific">Brassica napus</name>
    <name type="common">Rape</name>
    <dbReference type="NCBI Taxonomy" id="3708"/>
    <lineage>
        <taxon>Eukaryota</taxon>
        <taxon>Viridiplantae</taxon>
        <taxon>Streptophyta</taxon>
        <taxon>Embryophyta</taxon>
        <taxon>Tracheophyta</taxon>
        <taxon>Spermatophyta</taxon>
        <taxon>Magnoliopsida</taxon>
        <taxon>eudicotyledons</taxon>
        <taxon>Gunneridae</taxon>
        <taxon>Pentapetalae</taxon>
        <taxon>rosids</taxon>
        <taxon>malvids</taxon>
        <taxon>Brassicales</taxon>
        <taxon>Brassicaceae</taxon>
        <taxon>Brassiceae</taxon>
        <taxon>Brassica</taxon>
    </lineage>
</organism>